<organism>
    <name type="scientific">Caretta caretta</name>
    <name type="common">Loggerhead sea turtle</name>
    <dbReference type="NCBI Taxonomy" id="8467"/>
    <lineage>
        <taxon>Eukaryota</taxon>
        <taxon>Metazoa</taxon>
        <taxon>Chordata</taxon>
        <taxon>Craniata</taxon>
        <taxon>Vertebrata</taxon>
        <taxon>Euteleostomi</taxon>
        <taxon>Archelosauria</taxon>
        <taxon>Testudinata</taxon>
        <taxon>Testudines</taxon>
        <taxon>Cryptodira</taxon>
        <taxon>Durocryptodira</taxon>
        <taxon>Americhelydia</taxon>
        <taxon>Chelonioidea</taxon>
        <taxon>Cheloniidae</taxon>
        <taxon>Caretta</taxon>
    </lineage>
</organism>
<protein>
    <recommendedName>
        <fullName>Rathke gland glycoprotein</fullName>
    </recommendedName>
</protein>
<sequence>SDDDGTVVLTTSGPI</sequence>
<reference key="1">
    <citation type="journal article" date="1989" name="Comp. Biochem. Physiol.">
        <title>Glycoproteins in Rathke's gland secretions of loggerhead (Caretta caretta) and Kemp's ridley (Lepidochelys kempi) sea turtles.</title>
        <authorList>
            <person name="Radhakrishna G."/>
            <person name="Chin C.C.Q."/>
            <person name="Wold F."/>
            <person name="Weldon P.J."/>
        </authorList>
    </citation>
    <scope>PROTEIN SEQUENCE</scope>
    <scope>GLYCOSYLATION</scope>
    <source>
        <tissue>Rathke gland</tissue>
    </source>
</reference>
<evidence type="ECO:0000269" key="1">
    <source>
    </source>
</evidence>
<proteinExistence type="evidence at protein level"/>
<comment type="function">
    <text>Rathke gland secretions may function as pheromones, as predator repellents, or contribute to the maintenance of the turtle shell.</text>
</comment>
<comment type="subcellular location">
    <subcellularLocation>
        <location>Secreted</location>
    </subcellularLocation>
</comment>
<comment type="PTM">
    <text evidence="1">Glycosylated.</text>
</comment>
<accession>P21586</accession>
<feature type="chain" id="PRO_0000097356" description="Rathke gland glycoprotein">
    <location>
        <begin position="1"/>
        <end position="15" status="greater than"/>
    </location>
</feature>
<feature type="non-terminal residue">
    <location>
        <position position="15"/>
    </location>
</feature>
<name>RKGG_CARCR</name>
<dbReference type="PIR" id="PL0154">
    <property type="entry name" value="PL0154"/>
</dbReference>
<dbReference type="GO" id="GO:0005576">
    <property type="term" value="C:extracellular region"/>
    <property type="evidence" value="ECO:0007669"/>
    <property type="project" value="UniProtKB-SubCell"/>
</dbReference>
<keyword id="KW-0903">Direct protein sequencing</keyword>
<keyword id="KW-0325">Glycoprotein</keyword>
<keyword id="KW-0964">Secreted</keyword>